<protein>
    <recommendedName>
        <fullName evidence="1">Ribulose bisphosphate carboxylase</fullName>
        <shortName evidence="1">RuBisCO</shortName>
        <ecNumber evidence="1">4.1.1.39</ecNumber>
    </recommendedName>
</protein>
<reference key="1">
    <citation type="journal article" date="1997" name="Nature">
        <title>The complete genome sequence of the hyperthermophilic, sulphate-reducing archaeon Archaeoglobus fulgidus.</title>
        <authorList>
            <person name="Klenk H.-P."/>
            <person name="Clayton R.A."/>
            <person name="Tomb J.-F."/>
            <person name="White O."/>
            <person name="Nelson K.E."/>
            <person name="Ketchum K.A."/>
            <person name="Dodson R.J."/>
            <person name="Gwinn M.L."/>
            <person name="Hickey E.K."/>
            <person name="Peterson J.D."/>
            <person name="Richardson D.L."/>
            <person name="Kerlavage A.R."/>
            <person name="Graham D.E."/>
            <person name="Kyrpides N.C."/>
            <person name="Fleischmann R.D."/>
            <person name="Quackenbush J."/>
            <person name="Lee N.H."/>
            <person name="Sutton G.G."/>
            <person name="Gill S.R."/>
            <person name="Kirkness E.F."/>
            <person name="Dougherty B.A."/>
            <person name="McKenney K."/>
            <person name="Adams M.D."/>
            <person name="Loftus B.J."/>
            <person name="Peterson S.N."/>
            <person name="Reich C.I."/>
            <person name="McNeil L.K."/>
            <person name="Badger J.H."/>
            <person name="Glodek A."/>
            <person name="Zhou L."/>
            <person name="Overbeek R."/>
            <person name="Gocayne J.D."/>
            <person name="Weidman J.F."/>
            <person name="McDonald L.A."/>
            <person name="Utterback T.R."/>
            <person name="Cotton M.D."/>
            <person name="Spriggs T."/>
            <person name="Artiach P."/>
            <person name="Kaine B.P."/>
            <person name="Sykes S.M."/>
            <person name="Sadow P.W."/>
            <person name="D'Andrea K.P."/>
            <person name="Bowman C."/>
            <person name="Fujii C."/>
            <person name="Garland S.A."/>
            <person name="Mason T.M."/>
            <person name="Olsen G.J."/>
            <person name="Fraser C.M."/>
            <person name="Smith H.O."/>
            <person name="Woese C.R."/>
            <person name="Venter J.C."/>
        </authorList>
    </citation>
    <scope>NUCLEOTIDE SEQUENCE [LARGE SCALE GENOMIC DNA]</scope>
    <source>
        <strain>ATCC 49558 / DSM 4304 / JCM 9628 / NBRC 100126 / VC-16</strain>
    </source>
</reference>
<reference key="2">
    <citation type="journal article" date="2003" name="J. Bacteriol.">
        <title>Synthesis of catalytically active form III ribulose 1,5-bisphosphate carboxylase/oxygenase in archaea.</title>
        <authorList>
            <person name="Finn M.W."/>
            <person name="Tabita F.R."/>
        </authorList>
    </citation>
    <scope>CATALYTIC ACTIVITY</scope>
    <scope>ACTIVITY REGULATION</scope>
    <scope>BIOPHYSICOCHEMICAL PROPERTIES</scope>
    <scope>SUBUNIT</scope>
    <source>
        <strain>ATCC 49558 / DSM 4304 / JCM 9628 / NBRC 100126 / VC-16</strain>
    </source>
</reference>
<keyword id="KW-0002">3D-structure</keyword>
<keyword id="KW-0120">Carbon dioxide fixation</keyword>
<keyword id="KW-0456">Lyase</keyword>
<keyword id="KW-0460">Magnesium</keyword>
<keyword id="KW-0479">Metal-binding</keyword>
<keyword id="KW-0560">Oxidoreductase</keyword>
<keyword id="KW-1185">Reference proteome</keyword>
<sequence>MAEFEIYREYVDKSYEPQKDDIVAVFRITPAEGFTIEDAAGAVAAESSTGTWTSLHPWYDEERVKGLSAKAYDFVDLGDGSSIVRIAYPSELFEPHNMPGLLASIAGNVFGMKRVKGLRLEDLQLPKSFLKDFKGPSKGKEGVKKIFGVADRPIVGTVPKPKVGYSAEEVEKLAYELLSGGMDYIKDDENLTSPAYCRFEERAERIMKVIEKVEAETGEKKSWFANITADVREMERRLKLVAELGNPHVMVDVVITGWGALEYIRDLAEDYDLAIHGHRAMHAAFTRNAKHGISMFVLAKLYRIIGIDQLHIGTAGAGKLEGQKWDTVQNARIFSEVEYTPDEGDAFHLSQNFHHIKPAMPVSSGGLHPGNLEPVIDALGKEIVIQVGGGVLGHPMGAKAGAKAVRQALDAIISAIPLEEHAKQHPELQAALEKWGRVTPI</sequence>
<feature type="chain" id="PRO_0000062671" description="Ribulose bisphosphate carboxylase">
    <location>
        <begin position="1"/>
        <end position="441"/>
    </location>
</feature>
<feature type="active site" description="Proton acceptor" evidence="1">
    <location>
        <position position="160"/>
    </location>
</feature>
<feature type="active site" description="Proton acceptor" evidence="1">
    <location>
        <position position="278"/>
    </location>
</feature>
<feature type="binding site" evidence="1">
    <location>
        <position position="162"/>
    </location>
    <ligand>
        <name>substrate</name>
    </ligand>
</feature>
<feature type="binding site" description="via carbamate group" evidence="1">
    <location>
        <position position="186"/>
    </location>
    <ligand>
        <name>Mg(2+)</name>
        <dbReference type="ChEBI" id="CHEBI:18420"/>
    </ligand>
</feature>
<feature type="binding site" evidence="1">
    <location>
        <position position="188"/>
    </location>
    <ligand>
        <name>Mg(2+)</name>
        <dbReference type="ChEBI" id="CHEBI:18420"/>
    </ligand>
</feature>
<feature type="binding site" evidence="1">
    <location>
        <position position="189"/>
    </location>
    <ligand>
        <name>Mg(2+)</name>
        <dbReference type="ChEBI" id="CHEBI:18420"/>
    </ligand>
</feature>
<feature type="binding site" evidence="1">
    <location>
        <position position="279"/>
    </location>
    <ligand>
        <name>substrate</name>
    </ligand>
</feature>
<feature type="binding site" evidence="1">
    <location>
        <position position="311"/>
    </location>
    <ligand>
        <name>substrate</name>
    </ligand>
</feature>
<feature type="binding site" evidence="1">
    <location>
        <begin position="364"/>
        <end position="366"/>
    </location>
    <ligand>
        <name>substrate</name>
    </ligand>
</feature>
<feature type="binding site" evidence="1">
    <location>
        <begin position="386"/>
        <end position="389"/>
    </location>
    <ligand>
        <name>substrate</name>
    </ligand>
</feature>
<feature type="site" description="Transition state stabilizer" evidence="1">
    <location>
        <position position="319"/>
    </location>
</feature>
<feature type="modified residue" description="N6-carboxylysine" evidence="1">
    <location>
        <position position="186"/>
    </location>
</feature>
<feature type="helix" evidence="3">
    <location>
        <begin position="7"/>
        <end position="10"/>
    </location>
</feature>
<feature type="strand" evidence="3">
    <location>
        <begin position="21"/>
        <end position="30"/>
    </location>
</feature>
<feature type="helix" evidence="3">
    <location>
        <begin position="36"/>
        <end position="46"/>
    </location>
</feature>
<feature type="turn" evidence="3">
    <location>
        <begin position="47"/>
        <end position="49"/>
    </location>
</feature>
<feature type="helix" evidence="3">
    <location>
        <begin position="61"/>
        <end position="67"/>
    </location>
</feature>
<feature type="strand" evidence="3">
    <location>
        <begin position="70"/>
        <end position="76"/>
    </location>
</feature>
<feature type="strand" evidence="3">
    <location>
        <begin position="78"/>
        <end position="80"/>
    </location>
</feature>
<feature type="strand" evidence="3">
    <location>
        <begin position="82"/>
        <end position="89"/>
    </location>
</feature>
<feature type="helix" evidence="3">
    <location>
        <begin position="90"/>
        <end position="92"/>
    </location>
</feature>
<feature type="helix" evidence="3">
    <location>
        <begin position="98"/>
        <end position="105"/>
    </location>
</feature>
<feature type="helix" evidence="3">
    <location>
        <begin position="108"/>
        <end position="111"/>
    </location>
</feature>
<feature type="strand" evidence="3">
    <location>
        <begin position="115"/>
        <end position="124"/>
    </location>
</feature>
<feature type="helix" evidence="3">
    <location>
        <begin position="127"/>
        <end position="130"/>
    </location>
</feature>
<feature type="helix" evidence="3">
    <location>
        <begin position="139"/>
        <end position="147"/>
    </location>
</feature>
<feature type="strand" evidence="3">
    <location>
        <begin position="154"/>
        <end position="157"/>
    </location>
</feature>
<feature type="strand" evidence="3">
    <location>
        <begin position="160"/>
        <end position="163"/>
    </location>
</feature>
<feature type="helix" evidence="3">
    <location>
        <begin position="167"/>
        <end position="179"/>
    </location>
</feature>
<feature type="strand" evidence="3">
    <location>
        <begin position="183"/>
        <end position="186"/>
    </location>
</feature>
<feature type="helix" evidence="3">
    <location>
        <begin position="199"/>
        <end position="217"/>
    </location>
</feature>
<feature type="strand" evidence="3">
    <location>
        <begin position="222"/>
        <end position="224"/>
    </location>
</feature>
<feature type="helix" evidence="3">
    <location>
        <begin position="231"/>
        <end position="243"/>
    </location>
</feature>
<feature type="strand" evidence="3">
    <location>
        <begin position="247"/>
        <end position="252"/>
    </location>
</feature>
<feature type="helix" evidence="3">
    <location>
        <begin position="253"/>
        <end position="256"/>
    </location>
</feature>
<feature type="helix" evidence="3">
    <location>
        <begin position="258"/>
        <end position="270"/>
    </location>
</feature>
<feature type="strand" evidence="3">
    <location>
        <begin position="274"/>
        <end position="278"/>
    </location>
</feature>
<feature type="turn" evidence="3">
    <location>
        <begin position="280"/>
        <end position="282"/>
    </location>
</feature>
<feature type="helix" evidence="3">
    <location>
        <begin position="283"/>
        <end position="286"/>
    </location>
</feature>
<feature type="strand" evidence="3">
    <location>
        <begin position="291"/>
        <end position="293"/>
    </location>
</feature>
<feature type="helix" evidence="3">
    <location>
        <begin position="295"/>
        <end position="305"/>
    </location>
</feature>
<feature type="strand" evidence="3">
    <location>
        <begin position="308"/>
        <end position="311"/>
    </location>
</feature>
<feature type="strand" evidence="3">
    <location>
        <begin position="317"/>
        <end position="321"/>
    </location>
</feature>
<feature type="helix" evidence="3">
    <location>
        <begin position="324"/>
        <end position="335"/>
    </location>
</feature>
<feature type="strand" evidence="3">
    <location>
        <begin position="337"/>
        <end position="339"/>
    </location>
</feature>
<feature type="strand" evidence="3">
    <location>
        <begin position="360"/>
        <end position="366"/>
    </location>
</feature>
<feature type="helix" evidence="3">
    <location>
        <begin position="369"/>
        <end position="371"/>
    </location>
</feature>
<feature type="helix" evidence="3">
    <location>
        <begin position="372"/>
        <end position="379"/>
    </location>
</feature>
<feature type="strand" evidence="3">
    <location>
        <begin position="381"/>
        <end position="386"/>
    </location>
</feature>
<feature type="helix" evidence="3">
    <location>
        <begin position="389"/>
        <end position="392"/>
    </location>
</feature>
<feature type="helix" evidence="3">
    <location>
        <begin position="398"/>
        <end position="413"/>
    </location>
</feature>
<feature type="helix" evidence="3">
    <location>
        <begin position="418"/>
        <end position="421"/>
    </location>
</feature>
<feature type="helix" evidence="3">
    <location>
        <begin position="422"/>
        <end position="424"/>
    </location>
</feature>
<feature type="helix" evidence="3">
    <location>
        <begin position="426"/>
        <end position="435"/>
    </location>
</feature>
<gene>
    <name evidence="1" type="primary">rbcL</name>
    <name type="ordered locus">AF_1638</name>
</gene>
<comment type="function">
    <text evidence="1">Catalyzes the addition of molecular CO(2) and H(2)O to ribulose 1,5-bisphosphate (RuBP), generating two molecules of 3-phosphoglycerate (3-PGA). Functions in an archaeal AMP degradation pathway, together with AMP phosphorylase and R15P isomerase.</text>
</comment>
<comment type="catalytic activity">
    <reaction evidence="1 2">
        <text>2 (2R)-3-phosphoglycerate + 2 H(+) = D-ribulose 1,5-bisphosphate + CO2 + H2O</text>
        <dbReference type="Rhea" id="RHEA:23124"/>
        <dbReference type="ChEBI" id="CHEBI:15377"/>
        <dbReference type="ChEBI" id="CHEBI:15378"/>
        <dbReference type="ChEBI" id="CHEBI:16526"/>
        <dbReference type="ChEBI" id="CHEBI:57870"/>
        <dbReference type="ChEBI" id="CHEBI:58272"/>
        <dbReference type="EC" id="4.1.1.39"/>
    </reaction>
</comment>
<comment type="catalytic activity">
    <reaction evidence="1 2">
        <text>D-ribulose 1,5-bisphosphate + O2 = 2-phosphoglycolate + (2R)-3-phosphoglycerate + 2 H(+)</text>
        <dbReference type="Rhea" id="RHEA:36631"/>
        <dbReference type="ChEBI" id="CHEBI:15378"/>
        <dbReference type="ChEBI" id="CHEBI:15379"/>
        <dbReference type="ChEBI" id="CHEBI:57870"/>
        <dbReference type="ChEBI" id="CHEBI:58033"/>
        <dbReference type="ChEBI" id="CHEBI:58272"/>
    </reaction>
</comment>
<comment type="cofactor">
    <cofactor evidence="1">
        <name>Mg(2+)</name>
        <dbReference type="ChEBI" id="CHEBI:18420"/>
    </cofactor>
    <text evidence="1">Binds 1 Mg(2+) ion per subunit.</text>
</comment>
<comment type="activity regulation">
    <text evidence="2">Reversibly inhibited by O(2).</text>
</comment>
<comment type="biophysicochemical properties">
    <temperatureDependence>
        <text evidence="2">Active over a broad temperature range.</text>
    </temperatureDependence>
</comment>
<comment type="subunit">
    <text evidence="2">Homodimer. In contrast to form I RuBisCO, the form III RuBisCO is composed solely of large subunits.</text>
</comment>
<comment type="miscellaneous">
    <text evidence="1">Because the Archaea possessing a type III RuBisCO are all anaerobic, it is most likely that only the carboxylase activity of RuBisCO, and not the competitive oxygenase activity (by which RuBP reacts with O(2) to form one molecule of 3-phosphoglycerate and one molecule of 2-phosphoglycolate), is biologically relevant in these strains.</text>
</comment>
<comment type="similarity">
    <text evidence="1">Belongs to the RuBisCO large chain family. Type III subfamily.</text>
</comment>
<accession>O28635</accession>
<proteinExistence type="evidence at protein level"/>
<name>RBL_ARCFU</name>
<organism>
    <name type="scientific">Archaeoglobus fulgidus (strain ATCC 49558 / DSM 4304 / JCM 9628 / NBRC 100126 / VC-16)</name>
    <dbReference type="NCBI Taxonomy" id="224325"/>
    <lineage>
        <taxon>Archaea</taxon>
        <taxon>Methanobacteriati</taxon>
        <taxon>Methanobacteriota</taxon>
        <taxon>Archaeoglobi</taxon>
        <taxon>Archaeoglobales</taxon>
        <taxon>Archaeoglobaceae</taxon>
        <taxon>Archaeoglobus</taxon>
    </lineage>
</organism>
<dbReference type="EC" id="4.1.1.39" evidence="1"/>
<dbReference type="EMBL" id="AE000782">
    <property type="protein sequence ID" value="AAB89603.1"/>
    <property type="molecule type" value="Genomic_DNA"/>
</dbReference>
<dbReference type="PIR" id="E69454">
    <property type="entry name" value="E69454"/>
</dbReference>
<dbReference type="RefSeq" id="WP_010879134.1">
    <property type="nucleotide sequence ID" value="NC_000917.1"/>
</dbReference>
<dbReference type="PDB" id="8DHT">
    <property type="method" value="X-ray"/>
    <property type="resolution" value="1.70 A"/>
    <property type="chains" value="A/B/C/D=1-441"/>
</dbReference>
<dbReference type="PDBsum" id="8DHT"/>
<dbReference type="SMR" id="O28635"/>
<dbReference type="STRING" id="224325.AF_1638"/>
<dbReference type="PaxDb" id="224325-AF_1638"/>
<dbReference type="EnsemblBacteria" id="AAB89603">
    <property type="protein sequence ID" value="AAB89603"/>
    <property type="gene ID" value="AF_1638"/>
</dbReference>
<dbReference type="GeneID" id="24795382"/>
<dbReference type="KEGG" id="afu:AF_1638"/>
<dbReference type="eggNOG" id="arCOG04443">
    <property type="taxonomic scope" value="Archaea"/>
</dbReference>
<dbReference type="HOGENOM" id="CLU_031450_3_1_2"/>
<dbReference type="OrthoDB" id="52787at2157"/>
<dbReference type="PhylomeDB" id="O28635"/>
<dbReference type="BRENDA" id="4.1.1.39">
    <property type="organism ID" value="414"/>
</dbReference>
<dbReference type="Proteomes" id="UP000002199">
    <property type="component" value="Chromosome"/>
</dbReference>
<dbReference type="GO" id="GO:0000287">
    <property type="term" value="F:magnesium ion binding"/>
    <property type="evidence" value="ECO:0007669"/>
    <property type="project" value="UniProtKB-UniRule"/>
</dbReference>
<dbReference type="GO" id="GO:0016491">
    <property type="term" value="F:oxidoreductase activity"/>
    <property type="evidence" value="ECO:0007669"/>
    <property type="project" value="UniProtKB-KW"/>
</dbReference>
<dbReference type="GO" id="GO:0016984">
    <property type="term" value="F:ribulose-bisphosphate carboxylase activity"/>
    <property type="evidence" value="ECO:0007669"/>
    <property type="project" value="UniProtKB-UniRule"/>
</dbReference>
<dbReference type="GO" id="GO:0006196">
    <property type="term" value="P:AMP catabolic process"/>
    <property type="evidence" value="ECO:0007669"/>
    <property type="project" value="UniProtKB-UniRule"/>
</dbReference>
<dbReference type="GO" id="GO:0015977">
    <property type="term" value="P:carbon fixation"/>
    <property type="evidence" value="ECO:0007669"/>
    <property type="project" value="UniProtKB-KW"/>
</dbReference>
<dbReference type="CDD" id="cd08213">
    <property type="entry name" value="RuBisCO_large_III"/>
    <property type="match status" value="1"/>
</dbReference>
<dbReference type="Gene3D" id="3.20.20.110">
    <property type="entry name" value="Ribulose bisphosphate carboxylase, large subunit, C-terminal domain"/>
    <property type="match status" value="1"/>
</dbReference>
<dbReference type="Gene3D" id="3.30.70.150">
    <property type="entry name" value="RuBisCO large subunit, N-terminal domain"/>
    <property type="match status" value="1"/>
</dbReference>
<dbReference type="HAMAP" id="MF_01133">
    <property type="entry name" value="RuBisCO_L_type3"/>
    <property type="match status" value="1"/>
</dbReference>
<dbReference type="InterPro" id="IPR033966">
    <property type="entry name" value="RuBisCO"/>
</dbReference>
<dbReference type="InterPro" id="IPR017712">
    <property type="entry name" value="RuBisCO_III"/>
</dbReference>
<dbReference type="InterPro" id="IPR000685">
    <property type="entry name" value="RuBisCO_lsu_C"/>
</dbReference>
<dbReference type="InterPro" id="IPR036376">
    <property type="entry name" value="RuBisCO_lsu_C_sf"/>
</dbReference>
<dbReference type="InterPro" id="IPR017443">
    <property type="entry name" value="RuBisCO_lsu_fd_N"/>
</dbReference>
<dbReference type="InterPro" id="IPR036422">
    <property type="entry name" value="RuBisCO_lsu_N_sf"/>
</dbReference>
<dbReference type="NCBIfam" id="NF003252">
    <property type="entry name" value="PRK04208.1"/>
    <property type="match status" value="1"/>
</dbReference>
<dbReference type="NCBIfam" id="TIGR03326">
    <property type="entry name" value="rubisco_III"/>
    <property type="match status" value="1"/>
</dbReference>
<dbReference type="PANTHER" id="PTHR42704">
    <property type="entry name" value="RIBULOSE BISPHOSPHATE CARBOXYLASE"/>
    <property type="match status" value="1"/>
</dbReference>
<dbReference type="PANTHER" id="PTHR42704:SF17">
    <property type="entry name" value="RIBULOSE BISPHOSPHATE CARBOXYLASE LARGE CHAIN"/>
    <property type="match status" value="1"/>
</dbReference>
<dbReference type="Pfam" id="PF00016">
    <property type="entry name" value="RuBisCO_large"/>
    <property type="match status" value="1"/>
</dbReference>
<dbReference type="Pfam" id="PF02788">
    <property type="entry name" value="RuBisCO_large_N"/>
    <property type="match status" value="1"/>
</dbReference>
<dbReference type="SFLD" id="SFLDG01052">
    <property type="entry name" value="RuBisCO"/>
    <property type="match status" value="1"/>
</dbReference>
<dbReference type="SFLD" id="SFLDS00014">
    <property type="entry name" value="RuBisCO"/>
    <property type="match status" value="2"/>
</dbReference>
<dbReference type="SFLD" id="SFLDG00301">
    <property type="entry name" value="RuBisCO-like_proteins"/>
    <property type="match status" value="1"/>
</dbReference>
<dbReference type="SUPFAM" id="SSF51649">
    <property type="entry name" value="RuBisCo, C-terminal domain"/>
    <property type="match status" value="1"/>
</dbReference>
<dbReference type="SUPFAM" id="SSF54966">
    <property type="entry name" value="RuBisCO, large subunit, small (N-terminal) domain"/>
    <property type="match status" value="1"/>
</dbReference>
<evidence type="ECO:0000255" key="1">
    <source>
        <dbReference type="HAMAP-Rule" id="MF_01133"/>
    </source>
</evidence>
<evidence type="ECO:0000269" key="2">
    <source>
    </source>
</evidence>
<evidence type="ECO:0007829" key="3">
    <source>
        <dbReference type="PDB" id="8DHT"/>
    </source>
</evidence>